<feature type="chain" id="PRO_0000136669" description="Tryptophan--tRNA ligase">
    <location>
        <begin position="1"/>
        <end position="330"/>
    </location>
</feature>
<feature type="short sequence motif" description="'HIGH' region" evidence="1">
    <location>
        <begin position="11"/>
        <end position="19"/>
    </location>
</feature>
<feature type="short sequence motif" description="'KMSKS' region" evidence="1">
    <location>
        <begin position="195"/>
        <end position="199"/>
    </location>
</feature>
<feature type="binding site" evidence="1">
    <location>
        <begin position="10"/>
        <end position="12"/>
    </location>
    <ligand>
        <name>ATP</name>
        <dbReference type="ChEBI" id="CHEBI:30616"/>
    </ligand>
</feature>
<feature type="binding site" evidence="1">
    <location>
        <begin position="18"/>
        <end position="19"/>
    </location>
    <ligand>
        <name>ATP</name>
        <dbReference type="ChEBI" id="CHEBI:30616"/>
    </ligand>
</feature>
<feature type="binding site" evidence="1">
    <location>
        <position position="134"/>
    </location>
    <ligand>
        <name>L-tryptophan</name>
        <dbReference type="ChEBI" id="CHEBI:57912"/>
    </ligand>
</feature>
<feature type="binding site" evidence="1">
    <location>
        <begin position="146"/>
        <end position="148"/>
    </location>
    <ligand>
        <name>ATP</name>
        <dbReference type="ChEBI" id="CHEBI:30616"/>
    </ligand>
</feature>
<feature type="binding site" evidence="1">
    <location>
        <position position="186"/>
    </location>
    <ligand>
        <name>ATP</name>
        <dbReference type="ChEBI" id="CHEBI:30616"/>
    </ligand>
</feature>
<feature type="binding site" evidence="1">
    <location>
        <begin position="195"/>
        <end position="199"/>
    </location>
    <ligand>
        <name>ATP</name>
        <dbReference type="ChEBI" id="CHEBI:30616"/>
    </ligand>
</feature>
<sequence length="330" mass="37505">MKKTVLSGVQATGSLHLGNYLGAIKNWVKMQEEYNCFFFLADLHAITVDIKPSELNNSIMEVLAVYLAAGLNPDKVTIFAQSMVKEHTELAWLLNCVTPLGWLKRMTQFKDKAGSDQEKACLGLFSYPVLMAADILIYKADIVPVGEDQKQHLELTRDIAGVINRKFNKEILKVPEVLISETGTRIMSLRDGLKKMSKSDISDFSRINLKDDNDLIHQKIKKAKTDHLSFVSYDQETRPEISNLLDIYSSLSEESLEQIIGNYQNQGFAKFKEDLAEIIITNLQPIRDKYLELMNDKEYLLKILHKGAEKARIRASETVNEVKEQFGFVI</sequence>
<name>SYW_RICCN</name>
<dbReference type="EC" id="6.1.1.2" evidence="1"/>
<dbReference type="EMBL" id="AE006914">
    <property type="protein sequence ID" value="AAL03248.1"/>
    <property type="molecule type" value="Genomic_DNA"/>
</dbReference>
<dbReference type="PIR" id="F97788">
    <property type="entry name" value="F97788"/>
</dbReference>
<dbReference type="RefSeq" id="WP_010977330.1">
    <property type="nucleotide sequence ID" value="NC_003103.1"/>
</dbReference>
<dbReference type="SMR" id="Q92HR1"/>
<dbReference type="GeneID" id="927621"/>
<dbReference type="KEGG" id="rco:RC0710"/>
<dbReference type="PATRIC" id="fig|272944.4.peg.806"/>
<dbReference type="HOGENOM" id="CLU_029244_1_4_5"/>
<dbReference type="Proteomes" id="UP000000816">
    <property type="component" value="Chromosome"/>
</dbReference>
<dbReference type="GO" id="GO:0005737">
    <property type="term" value="C:cytoplasm"/>
    <property type="evidence" value="ECO:0007669"/>
    <property type="project" value="UniProtKB-SubCell"/>
</dbReference>
<dbReference type="GO" id="GO:0005524">
    <property type="term" value="F:ATP binding"/>
    <property type="evidence" value="ECO:0007669"/>
    <property type="project" value="UniProtKB-UniRule"/>
</dbReference>
<dbReference type="GO" id="GO:0004830">
    <property type="term" value="F:tryptophan-tRNA ligase activity"/>
    <property type="evidence" value="ECO:0007669"/>
    <property type="project" value="UniProtKB-UniRule"/>
</dbReference>
<dbReference type="GO" id="GO:0006436">
    <property type="term" value="P:tryptophanyl-tRNA aminoacylation"/>
    <property type="evidence" value="ECO:0007669"/>
    <property type="project" value="UniProtKB-UniRule"/>
</dbReference>
<dbReference type="CDD" id="cd00806">
    <property type="entry name" value="TrpRS_core"/>
    <property type="match status" value="1"/>
</dbReference>
<dbReference type="FunFam" id="1.10.240.10:FF:000002">
    <property type="entry name" value="Tryptophan--tRNA ligase"/>
    <property type="match status" value="1"/>
</dbReference>
<dbReference type="Gene3D" id="3.40.50.620">
    <property type="entry name" value="HUPs"/>
    <property type="match status" value="1"/>
</dbReference>
<dbReference type="Gene3D" id="1.10.240.10">
    <property type="entry name" value="Tyrosyl-Transfer RNA Synthetase"/>
    <property type="match status" value="1"/>
</dbReference>
<dbReference type="HAMAP" id="MF_00140_B">
    <property type="entry name" value="Trp_tRNA_synth_B"/>
    <property type="match status" value="1"/>
</dbReference>
<dbReference type="InterPro" id="IPR002305">
    <property type="entry name" value="aa-tRNA-synth_Ic"/>
</dbReference>
<dbReference type="InterPro" id="IPR014729">
    <property type="entry name" value="Rossmann-like_a/b/a_fold"/>
</dbReference>
<dbReference type="InterPro" id="IPR002306">
    <property type="entry name" value="Trp-tRNA-ligase"/>
</dbReference>
<dbReference type="InterPro" id="IPR024109">
    <property type="entry name" value="Trp-tRNA-ligase_bac-type"/>
</dbReference>
<dbReference type="InterPro" id="IPR050203">
    <property type="entry name" value="Trp-tRNA_synthetase"/>
</dbReference>
<dbReference type="NCBIfam" id="TIGR00233">
    <property type="entry name" value="trpS"/>
    <property type="match status" value="1"/>
</dbReference>
<dbReference type="PANTHER" id="PTHR43766">
    <property type="entry name" value="TRYPTOPHAN--TRNA LIGASE, MITOCHONDRIAL"/>
    <property type="match status" value="1"/>
</dbReference>
<dbReference type="PANTHER" id="PTHR43766:SF1">
    <property type="entry name" value="TRYPTOPHAN--TRNA LIGASE, MITOCHONDRIAL"/>
    <property type="match status" value="1"/>
</dbReference>
<dbReference type="Pfam" id="PF00579">
    <property type="entry name" value="tRNA-synt_1b"/>
    <property type="match status" value="1"/>
</dbReference>
<dbReference type="PRINTS" id="PR01039">
    <property type="entry name" value="TRNASYNTHTRP"/>
</dbReference>
<dbReference type="SUPFAM" id="SSF52374">
    <property type="entry name" value="Nucleotidylyl transferase"/>
    <property type="match status" value="1"/>
</dbReference>
<organism>
    <name type="scientific">Rickettsia conorii (strain ATCC VR-613 / Malish 7)</name>
    <dbReference type="NCBI Taxonomy" id="272944"/>
    <lineage>
        <taxon>Bacteria</taxon>
        <taxon>Pseudomonadati</taxon>
        <taxon>Pseudomonadota</taxon>
        <taxon>Alphaproteobacteria</taxon>
        <taxon>Rickettsiales</taxon>
        <taxon>Rickettsiaceae</taxon>
        <taxon>Rickettsieae</taxon>
        <taxon>Rickettsia</taxon>
        <taxon>spotted fever group</taxon>
    </lineage>
</organism>
<evidence type="ECO:0000255" key="1">
    <source>
        <dbReference type="HAMAP-Rule" id="MF_00140"/>
    </source>
</evidence>
<protein>
    <recommendedName>
        <fullName evidence="1">Tryptophan--tRNA ligase</fullName>
        <ecNumber evidence="1">6.1.1.2</ecNumber>
    </recommendedName>
    <alternativeName>
        <fullName evidence="1">Tryptophanyl-tRNA synthetase</fullName>
        <shortName evidence="1">TrpRS</shortName>
    </alternativeName>
</protein>
<accession>Q92HR1</accession>
<gene>
    <name evidence="1" type="primary">trpS</name>
    <name type="ordered locus">RC0710</name>
</gene>
<proteinExistence type="inferred from homology"/>
<keyword id="KW-0030">Aminoacyl-tRNA synthetase</keyword>
<keyword id="KW-0067">ATP-binding</keyword>
<keyword id="KW-0963">Cytoplasm</keyword>
<keyword id="KW-0436">Ligase</keyword>
<keyword id="KW-0547">Nucleotide-binding</keyword>
<keyword id="KW-0648">Protein biosynthesis</keyword>
<reference key="1">
    <citation type="journal article" date="2001" name="Science">
        <title>Mechanisms of evolution in Rickettsia conorii and R. prowazekii.</title>
        <authorList>
            <person name="Ogata H."/>
            <person name="Audic S."/>
            <person name="Renesto-Audiffren P."/>
            <person name="Fournier P.-E."/>
            <person name="Barbe V."/>
            <person name="Samson D."/>
            <person name="Roux V."/>
            <person name="Cossart P."/>
            <person name="Weissenbach J."/>
            <person name="Claverie J.-M."/>
            <person name="Raoult D."/>
        </authorList>
    </citation>
    <scope>NUCLEOTIDE SEQUENCE [LARGE SCALE GENOMIC DNA]</scope>
    <source>
        <strain>ATCC VR-613 / Malish 7</strain>
    </source>
</reference>
<comment type="function">
    <text evidence="1">Catalyzes the attachment of tryptophan to tRNA(Trp).</text>
</comment>
<comment type="catalytic activity">
    <reaction evidence="1">
        <text>tRNA(Trp) + L-tryptophan + ATP = L-tryptophyl-tRNA(Trp) + AMP + diphosphate + H(+)</text>
        <dbReference type="Rhea" id="RHEA:24080"/>
        <dbReference type="Rhea" id="RHEA-COMP:9671"/>
        <dbReference type="Rhea" id="RHEA-COMP:9705"/>
        <dbReference type="ChEBI" id="CHEBI:15378"/>
        <dbReference type="ChEBI" id="CHEBI:30616"/>
        <dbReference type="ChEBI" id="CHEBI:33019"/>
        <dbReference type="ChEBI" id="CHEBI:57912"/>
        <dbReference type="ChEBI" id="CHEBI:78442"/>
        <dbReference type="ChEBI" id="CHEBI:78535"/>
        <dbReference type="ChEBI" id="CHEBI:456215"/>
        <dbReference type="EC" id="6.1.1.2"/>
    </reaction>
</comment>
<comment type="subunit">
    <text evidence="1">Homodimer.</text>
</comment>
<comment type="subcellular location">
    <subcellularLocation>
        <location evidence="1">Cytoplasm</location>
    </subcellularLocation>
</comment>
<comment type="similarity">
    <text evidence="1">Belongs to the class-I aminoacyl-tRNA synthetase family.</text>
</comment>